<protein>
    <recommendedName>
        <fullName evidence="2">GTP cyclohydrolase 1</fullName>
        <ecNumber evidence="2">3.5.4.16</ecNumber>
    </recommendedName>
    <alternativeName>
        <fullName evidence="2">GTP cyclohydrolase I</fullName>
        <shortName evidence="2">GTP-CH-I</shortName>
    </alternativeName>
</protein>
<sequence>MVDKEKIEIAVRMILEAIGEDPDREGLKDTPKRVARMYEEVFAGLSQDPSEHLERYFTEEHEEMVLVKDIPLYSMCEHHLLPFYGKAHVAYIPRKGKVTGLSKLARVVEGFAKRPQLQERLTSQIADAIMEKLNPRGVLVVIEAEHMCMTMRGVKKPGSKTITSAVRGIFATSVATRAEAMALIGHQSPLRD</sequence>
<feature type="chain" id="PRO_1000043675" description="GTP cyclohydrolase 1">
    <location>
        <begin position="1"/>
        <end position="192"/>
    </location>
</feature>
<feature type="binding site" evidence="2">
    <location>
        <position position="76"/>
    </location>
    <ligand>
        <name>Zn(2+)</name>
        <dbReference type="ChEBI" id="CHEBI:29105"/>
    </ligand>
</feature>
<feature type="binding site" evidence="2">
    <location>
        <position position="79"/>
    </location>
    <ligand>
        <name>Zn(2+)</name>
        <dbReference type="ChEBI" id="CHEBI:29105"/>
    </ligand>
</feature>
<feature type="binding site" evidence="2">
    <location>
        <position position="148"/>
    </location>
    <ligand>
        <name>Zn(2+)</name>
        <dbReference type="ChEBI" id="CHEBI:29105"/>
    </ligand>
</feature>
<name>GCH1_CARHZ</name>
<dbReference type="EC" id="3.5.4.16" evidence="2"/>
<dbReference type="EMBL" id="CP000141">
    <property type="protein sequence ID" value="ABB16090.1"/>
    <property type="molecule type" value="Genomic_DNA"/>
</dbReference>
<dbReference type="RefSeq" id="WP_011343878.1">
    <property type="nucleotide sequence ID" value="NC_007503.1"/>
</dbReference>
<dbReference type="SMR" id="Q3ADI2"/>
<dbReference type="FunCoup" id="Q3ADI2">
    <property type="interactions" value="248"/>
</dbReference>
<dbReference type="STRING" id="246194.CHY_0955"/>
<dbReference type="KEGG" id="chy:CHY_0955"/>
<dbReference type="eggNOG" id="COG0302">
    <property type="taxonomic scope" value="Bacteria"/>
</dbReference>
<dbReference type="HOGENOM" id="CLU_049768_3_3_9"/>
<dbReference type="InParanoid" id="Q3ADI2"/>
<dbReference type="OrthoDB" id="9801207at2"/>
<dbReference type="UniPathway" id="UPA00848">
    <property type="reaction ID" value="UER00151"/>
</dbReference>
<dbReference type="Proteomes" id="UP000002706">
    <property type="component" value="Chromosome"/>
</dbReference>
<dbReference type="GO" id="GO:0005737">
    <property type="term" value="C:cytoplasm"/>
    <property type="evidence" value="ECO:0007669"/>
    <property type="project" value="TreeGrafter"/>
</dbReference>
<dbReference type="GO" id="GO:0005525">
    <property type="term" value="F:GTP binding"/>
    <property type="evidence" value="ECO:0007669"/>
    <property type="project" value="UniProtKB-KW"/>
</dbReference>
<dbReference type="GO" id="GO:0003934">
    <property type="term" value="F:GTP cyclohydrolase I activity"/>
    <property type="evidence" value="ECO:0007669"/>
    <property type="project" value="UniProtKB-UniRule"/>
</dbReference>
<dbReference type="GO" id="GO:0008270">
    <property type="term" value="F:zinc ion binding"/>
    <property type="evidence" value="ECO:0007669"/>
    <property type="project" value="UniProtKB-UniRule"/>
</dbReference>
<dbReference type="GO" id="GO:0006730">
    <property type="term" value="P:one-carbon metabolic process"/>
    <property type="evidence" value="ECO:0007669"/>
    <property type="project" value="UniProtKB-UniRule"/>
</dbReference>
<dbReference type="GO" id="GO:0006729">
    <property type="term" value="P:tetrahydrobiopterin biosynthetic process"/>
    <property type="evidence" value="ECO:0007669"/>
    <property type="project" value="TreeGrafter"/>
</dbReference>
<dbReference type="GO" id="GO:0046654">
    <property type="term" value="P:tetrahydrofolate biosynthetic process"/>
    <property type="evidence" value="ECO:0007669"/>
    <property type="project" value="UniProtKB-UniRule"/>
</dbReference>
<dbReference type="CDD" id="cd00642">
    <property type="entry name" value="GTP_cyclohydro1"/>
    <property type="match status" value="1"/>
</dbReference>
<dbReference type="FunFam" id="1.10.286.10:FF:000001">
    <property type="entry name" value="GTP cyclohydrolase 1"/>
    <property type="match status" value="1"/>
</dbReference>
<dbReference type="FunFam" id="3.30.1130.10:FF:000001">
    <property type="entry name" value="GTP cyclohydrolase 1"/>
    <property type="match status" value="1"/>
</dbReference>
<dbReference type="Gene3D" id="1.10.286.10">
    <property type="match status" value="1"/>
</dbReference>
<dbReference type="Gene3D" id="3.30.1130.10">
    <property type="match status" value="1"/>
</dbReference>
<dbReference type="HAMAP" id="MF_00223">
    <property type="entry name" value="FolE"/>
    <property type="match status" value="1"/>
</dbReference>
<dbReference type="InterPro" id="IPR043133">
    <property type="entry name" value="GTP-CH-I_C/QueF"/>
</dbReference>
<dbReference type="InterPro" id="IPR043134">
    <property type="entry name" value="GTP-CH-I_N"/>
</dbReference>
<dbReference type="InterPro" id="IPR001474">
    <property type="entry name" value="GTP_CycHdrlase_I"/>
</dbReference>
<dbReference type="InterPro" id="IPR018234">
    <property type="entry name" value="GTP_CycHdrlase_I_CS"/>
</dbReference>
<dbReference type="InterPro" id="IPR020602">
    <property type="entry name" value="GTP_CycHdrlase_I_dom"/>
</dbReference>
<dbReference type="NCBIfam" id="TIGR00063">
    <property type="entry name" value="folE"/>
    <property type="match status" value="1"/>
</dbReference>
<dbReference type="NCBIfam" id="NF006825">
    <property type="entry name" value="PRK09347.1-2"/>
    <property type="match status" value="1"/>
</dbReference>
<dbReference type="NCBIfam" id="NF006826">
    <property type="entry name" value="PRK09347.1-3"/>
    <property type="match status" value="1"/>
</dbReference>
<dbReference type="PANTHER" id="PTHR11109:SF7">
    <property type="entry name" value="GTP CYCLOHYDROLASE 1"/>
    <property type="match status" value="1"/>
</dbReference>
<dbReference type="PANTHER" id="PTHR11109">
    <property type="entry name" value="GTP CYCLOHYDROLASE I"/>
    <property type="match status" value="1"/>
</dbReference>
<dbReference type="Pfam" id="PF01227">
    <property type="entry name" value="GTP_cyclohydroI"/>
    <property type="match status" value="1"/>
</dbReference>
<dbReference type="SUPFAM" id="SSF55620">
    <property type="entry name" value="Tetrahydrobiopterin biosynthesis enzymes-like"/>
    <property type="match status" value="1"/>
</dbReference>
<dbReference type="PROSITE" id="PS00859">
    <property type="entry name" value="GTP_CYCLOHYDROL_1_1"/>
    <property type="match status" value="1"/>
</dbReference>
<dbReference type="PROSITE" id="PS00860">
    <property type="entry name" value="GTP_CYCLOHYDROL_1_2"/>
    <property type="match status" value="1"/>
</dbReference>
<organism>
    <name type="scientific">Carboxydothermus hydrogenoformans (strain ATCC BAA-161 / DSM 6008 / Z-2901)</name>
    <dbReference type="NCBI Taxonomy" id="246194"/>
    <lineage>
        <taxon>Bacteria</taxon>
        <taxon>Bacillati</taxon>
        <taxon>Bacillota</taxon>
        <taxon>Clostridia</taxon>
        <taxon>Thermoanaerobacterales</taxon>
        <taxon>Thermoanaerobacteraceae</taxon>
        <taxon>Carboxydothermus</taxon>
    </lineage>
</organism>
<accession>Q3ADI2</accession>
<comment type="catalytic activity">
    <reaction evidence="2">
        <text>GTP + H2O = 7,8-dihydroneopterin 3'-triphosphate + formate + H(+)</text>
        <dbReference type="Rhea" id="RHEA:17473"/>
        <dbReference type="ChEBI" id="CHEBI:15377"/>
        <dbReference type="ChEBI" id="CHEBI:15378"/>
        <dbReference type="ChEBI" id="CHEBI:15740"/>
        <dbReference type="ChEBI" id="CHEBI:37565"/>
        <dbReference type="ChEBI" id="CHEBI:58462"/>
        <dbReference type="EC" id="3.5.4.16"/>
    </reaction>
</comment>
<comment type="pathway">
    <text evidence="2">Cofactor biosynthesis; 7,8-dihydroneopterin triphosphate biosynthesis; 7,8-dihydroneopterin triphosphate from GTP: step 1/1.</text>
</comment>
<comment type="subunit">
    <text evidence="1">Toroid-shaped homodecamer, composed of two pentamers of five dimers.</text>
</comment>
<comment type="similarity">
    <text evidence="2">Belongs to the GTP cyclohydrolase I family.</text>
</comment>
<reference key="1">
    <citation type="journal article" date="2005" name="PLoS Genet.">
        <title>Life in hot carbon monoxide: the complete genome sequence of Carboxydothermus hydrogenoformans Z-2901.</title>
        <authorList>
            <person name="Wu M."/>
            <person name="Ren Q."/>
            <person name="Durkin A.S."/>
            <person name="Daugherty S.C."/>
            <person name="Brinkac L.M."/>
            <person name="Dodson R.J."/>
            <person name="Madupu R."/>
            <person name="Sullivan S.A."/>
            <person name="Kolonay J.F."/>
            <person name="Nelson W.C."/>
            <person name="Tallon L.J."/>
            <person name="Jones K.M."/>
            <person name="Ulrich L.E."/>
            <person name="Gonzalez J.M."/>
            <person name="Zhulin I.B."/>
            <person name="Robb F.T."/>
            <person name="Eisen J.A."/>
        </authorList>
    </citation>
    <scope>NUCLEOTIDE SEQUENCE [LARGE SCALE GENOMIC DNA]</scope>
    <source>
        <strain>ATCC BAA-161 / DSM 6008 / Z-2901</strain>
    </source>
</reference>
<keyword id="KW-0342">GTP-binding</keyword>
<keyword id="KW-0378">Hydrolase</keyword>
<keyword id="KW-0479">Metal-binding</keyword>
<keyword id="KW-0547">Nucleotide-binding</keyword>
<keyword id="KW-0554">One-carbon metabolism</keyword>
<keyword id="KW-1185">Reference proteome</keyword>
<keyword id="KW-0862">Zinc</keyword>
<evidence type="ECO:0000250" key="1"/>
<evidence type="ECO:0000255" key="2">
    <source>
        <dbReference type="HAMAP-Rule" id="MF_00223"/>
    </source>
</evidence>
<proteinExistence type="inferred from homology"/>
<gene>
    <name evidence="2" type="primary">folE</name>
    <name type="ordered locus">CHY_0955</name>
</gene>